<evidence type="ECO:0000250" key="1">
    <source>
        <dbReference type="UniProtKB" id="P00590"/>
    </source>
</evidence>
<evidence type="ECO:0000250" key="2">
    <source>
        <dbReference type="UniProtKB" id="P11373"/>
    </source>
</evidence>
<evidence type="ECO:0000255" key="3"/>
<evidence type="ECO:0000269" key="4">
    <source>
    </source>
</evidence>
<evidence type="ECO:0000269" key="5">
    <source>
    </source>
</evidence>
<evidence type="ECO:0000303" key="6">
    <source>
    </source>
</evidence>
<evidence type="ECO:0000305" key="7"/>
<evidence type="ECO:0000305" key="8">
    <source>
    </source>
</evidence>
<evidence type="ECO:0000312" key="9">
    <source>
        <dbReference type="EMBL" id="ACB87560.1"/>
    </source>
</evidence>
<gene>
    <name evidence="6" type="primary">CUT1</name>
    <name evidence="6" type="synonym">09668</name>
</gene>
<reference evidence="7" key="1">
    <citation type="journal article" date="2009" name="Appl. Environ. Microbiol.">
        <title>Novel Coprinopsis cinerea polyesterase that hydrolyzes cutin and suberin.</title>
        <authorList>
            <person name="Kontkanen H."/>
            <person name="Westerholm-Parvinen A."/>
            <person name="Saloheimo M."/>
            <person name="Bailey M."/>
            <person name="Ratto M."/>
            <person name="Mattila I."/>
            <person name="Mohsina M."/>
            <person name="Kalkkinen N."/>
            <person name="Nakari-Setala T."/>
            <person name="Buchert J."/>
        </authorList>
    </citation>
    <scope>NUCLEOTIDE SEQUENCE [GENOMIC DNA]</scope>
    <scope>FUNCTION</scope>
    <scope>CATALYTIC ACTIVITY</scope>
    <scope>BIOPHYSICOCHEMICAL PROPERTIES</scope>
    <scope>MASS SPECTROMETRY</scope>
    <scope>PYROGLUTAMATE FORMATION AT GLN-28</scope>
    <source>
        <strain evidence="9">VTT D-041011</strain>
    </source>
</reference>
<reference evidence="7" key="2">
    <citation type="journal article" date="2009" name="J. Agric. Food Chem.">
        <title>Suberin of potato (Solanum tuberosum var. Nikola): comparison of the effect of cutinase CcCut1 with chemical depolymerization.</title>
        <authorList>
            <person name="Jaervinen R."/>
            <person name="Silvestre A.J."/>
            <person name="Holopainen U."/>
            <person name="Kaimainen M."/>
            <person name="Nyyssoelae A."/>
            <person name="Gil A.M."/>
            <person name="Pascoal Neto C."/>
            <person name="Lehtinen P."/>
            <person name="Buchert J."/>
            <person name="Kallio H."/>
        </authorList>
    </citation>
    <scope>FUNCTION</scope>
</reference>
<protein>
    <recommendedName>
        <fullName evidence="6">Cutinase CUT1</fullName>
        <ecNumber evidence="4">3.1.1.74</ecNumber>
    </recommendedName>
    <alternativeName>
        <fullName evidence="6">CcCUT1</fullName>
    </alternativeName>
</protein>
<accession>B9U443</accession>
<dbReference type="EC" id="3.1.1.74" evidence="4"/>
<dbReference type="EMBL" id="EU435153">
    <property type="protein sequence ID" value="ACB87560.1"/>
    <property type="molecule type" value="Genomic_DNA"/>
</dbReference>
<dbReference type="SMR" id="B9U443"/>
<dbReference type="ESTHER" id="copci-b9u443">
    <property type="family name" value="Cutinase"/>
</dbReference>
<dbReference type="VEuPathDB" id="FungiDB:CC1G_09668"/>
<dbReference type="VEuPathDB" id="FungiDB:CC2G_003771"/>
<dbReference type="OMA" id="YHNSANA"/>
<dbReference type="BRENDA" id="3.1.1.74">
    <property type="organism ID" value="1606"/>
</dbReference>
<dbReference type="GO" id="GO:0005576">
    <property type="term" value="C:extracellular region"/>
    <property type="evidence" value="ECO:0007669"/>
    <property type="project" value="InterPro"/>
</dbReference>
<dbReference type="GO" id="GO:0050525">
    <property type="term" value="F:cutinase activity"/>
    <property type="evidence" value="ECO:0000314"/>
    <property type="project" value="UniProtKB"/>
</dbReference>
<dbReference type="GO" id="GO:0016052">
    <property type="term" value="P:carbohydrate catabolic process"/>
    <property type="evidence" value="ECO:0007669"/>
    <property type="project" value="TreeGrafter"/>
</dbReference>
<dbReference type="Gene3D" id="3.40.50.1820">
    <property type="entry name" value="alpha/beta hydrolase"/>
    <property type="match status" value="1"/>
</dbReference>
<dbReference type="InterPro" id="IPR029058">
    <property type="entry name" value="AB_hydrolase_fold"/>
</dbReference>
<dbReference type="InterPro" id="IPR000675">
    <property type="entry name" value="Cutinase/axe"/>
</dbReference>
<dbReference type="InterPro" id="IPR011150">
    <property type="entry name" value="Cutinase_monf"/>
</dbReference>
<dbReference type="PANTHER" id="PTHR48250:SF2">
    <property type="entry name" value="CUTINASE"/>
    <property type="match status" value="1"/>
</dbReference>
<dbReference type="PANTHER" id="PTHR48250">
    <property type="entry name" value="CUTINASE 2-RELATED"/>
    <property type="match status" value="1"/>
</dbReference>
<dbReference type="Pfam" id="PF01083">
    <property type="entry name" value="Cutinase"/>
    <property type="match status" value="1"/>
</dbReference>
<dbReference type="PRINTS" id="PR00129">
    <property type="entry name" value="CUTINASE"/>
</dbReference>
<dbReference type="SMART" id="SM01110">
    <property type="entry name" value="Cutinase"/>
    <property type="match status" value="1"/>
</dbReference>
<dbReference type="SUPFAM" id="SSF53474">
    <property type="entry name" value="alpha/beta-Hydrolases"/>
    <property type="match status" value="1"/>
</dbReference>
<keyword id="KW-1015">Disulfide bond</keyword>
<keyword id="KW-0378">Hydrolase</keyword>
<keyword id="KW-0873">Pyrrolidone carboxylic acid</keyword>
<keyword id="KW-0732">Signal</keyword>
<sequence length="199" mass="20805">MKFTTLATLALGAVSALAAPVTELESRQLFCRDVYVFFARGTGEVGTLGTVVGPGLSAAVKLAVRDSVEFEGIDYPALVSGYLAGGDRGGARTMANKVSQTASRCPNAKIFISGYSQGAQVTHLAARQLSAADQARVTGVVTFGDPYRDDALPGGLQSRRKTYCNVGDLICAGLPTLLAPHFTYGSDTPDAARWIAARV</sequence>
<organism evidence="9">
    <name type="scientific">Coprinopsis cinerea</name>
    <name type="common">Inky cap fungus</name>
    <name type="synonym">Hormographiella aspergillata</name>
    <dbReference type="NCBI Taxonomy" id="5346"/>
    <lineage>
        <taxon>Eukaryota</taxon>
        <taxon>Fungi</taxon>
        <taxon>Dikarya</taxon>
        <taxon>Basidiomycota</taxon>
        <taxon>Agaricomycotina</taxon>
        <taxon>Agaricomycetes</taxon>
        <taxon>Agaricomycetidae</taxon>
        <taxon>Agaricales</taxon>
        <taxon>Agaricineae</taxon>
        <taxon>Psathyrellaceae</taxon>
        <taxon>Coprinopsis</taxon>
    </lineage>
</organism>
<feature type="signal peptide" evidence="3">
    <location>
        <begin position="1"/>
        <end position="18"/>
    </location>
</feature>
<feature type="propeptide" id="PRO_0000455276" evidence="4">
    <location>
        <begin position="19"/>
        <end position="27"/>
    </location>
</feature>
<feature type="chain" id="PRO_5002892738" description="Cutinase CUT1" evidence="3">
    <location>
        <begin position="28"/>
        <end position="199"/>
    </location>
</feature>
<feature type="active site" description="Nucleophile" evidence="1">
    <location>
        <position position="116"/>
    </location>
</feature>
<feature type="active site" evidence="1">
    <location>
        <position position="168"/>
    </location>
</feature>
<feature type="active site" description="Proton donor/acceptor" evidence="1">
    <location>
        <position position="181"/>
    </location>
</feature>
<feature type="site" description="Transition state stabilizer" evidence="1">
    <location>
        <position position="117"/>
    </location>
</feature>
<feature type="modified residue" description="Pyrrolidone carboxylic acid" evidence="8">
    <location>
        <position position="28"/>
    </location>
</feature>
<feature type="disulfide bond" evidence="1">
    <location>
        <begin position="31"/>
        <end position="105"/>
    </location>
</feature>
<feature type="disulfide bond" evidence="1">
    <location>
        <begin position="164"/>
        <end position="171"/>
    </location>
</feature>
<name>CUTI1_COPCI</name>
<comment type="function">
    <text evidence="4 5">Catalyzes the hydrolysis of complex carboxylic polyesters found in the cell wall of plants (PubMed:19201950, PubMed:19739639). Degrades cutin, a macromolecule that forms the structure of the plant cuticle (PubMed:19201950). Also degrades suberin, a specialized macromolecule found in the cell wall of various plant tissues (PubMed:19201950, PubMed:19739639).</text>
</comment>
<comment type="catalytic activity">
    <reaction evidence="4">
        <text>cutin + H2O = cutin monomers.</text>
        <dbReference type="EC" id="3.1.1.74"/>
    </reaction>
</comment>
<comment type="biophysicochemical properties">
    <phDependence>
        <text evidence="4">Optimum pH is 7-8.</text>
    </phDependence>
</comment>
<comment type="PTM">
    <text evidence="2">The 2 disulfide bonds play a critical role in holding the catalytic residues in juxta-position; reduction of the disulfide bridges results in the complete inactivation of the enzyme.</text>
</comment>
<comment type="mass spectrometry" mass="18863.0" method="Electrospray" evidence="4">
    <text>The mass corresponds to protein with a C-terminal six histidine tag and two disulfide bridges.</text>
</comment>
<comment type="similarity">
    <text evidence="7">Belongs to the cutinase family.</text>
</comment>
<proteinExistence type="evidence at protein level"/>